<accession>Q92ME3</accession>
<keyword id="KW-0131">Cell cycle</keyword>
<keyword id="KW-0132">Cell division</keyword>
<keyword id="KW-0159">Chromosome partition</keyword>
<keyword id="KW-0963">Cytoplasm</keyword>
<keyword id="KW-0229">DNA integration</keyword>
<keyword id="KW-0233">DNA recombination</keyword>
<keyword id="KW-0238">DNA-binding</keyword>
<keyword id="KW-1185">Reference proteome</keyword>
<evidence type="ECO:0000255" key="1">
    <source>
        <dbReference type="HAMAP-Rule" id="MF_01807"/>
    </source>
</evidence>
<evidence type="ECO:0000255" key="2">
    <source>
        <dbReference type="PROSITE-ProRule" id="PRU01246"/>
    </source>
</evidence>
<evidence type="ECO:0000255" key="3">
    <source>
        <dbReference type="PROSITE-ProRule" id="PRU01248"/>
    </source>
</evidence>
<comment type="function">
    <text evidence="1">Site-specific tyrosine recombinase, which acts by catalyzing the cutting and rejoining of the recombining DNA molecules. The XerC-XerD complex is essential to convert dimers of the bacterial chromosome into monomers to permit their segregation at cell division. It also contributes to the segregational stability of plasmids.</text>
</comment>
<comment type="subunit">
    <text evidence="1">Forms a cyclic heterotetrameric complex composed of two molecules of XerC and two molecules of XerD.</text>
</comment>
<comment type="subcellular location">
    <subcellularLocation>
        <location evidence="1">Cytoplasm</location>
    </subcellularLocation>
</comment>
<comment type="similarity">
    <text evidence="1">Belongs to the 'phage' integrase family. XerD subfamily.</text>
</comment>
<protein>
    <recommendedName>
        <fullName evidence="1">Tyrosine recombinase XerD</fullName>
    </recommendedName>
</protein>
<feature type="chain" id="PRO_0000095409" description="Tyrosine recombinase XerD">
    <location>
        <begin position="1"/>
        <end position="311"/>
    </location>
</feature>
<feature type="domain" description="Core-binding (CB)" evidence="3">
    <location>
        <begin position="3"/>
        <end position="88"/>
    </location>
</feature>
<feature type="domain" description="Tyr recombinase" evidence="2">
    <location>
        <begin position="109"/>
        <end position="298"/>
    </location>
</feature>
<feature type="active site" evidence="1">
    <location>
        <position position="156"/>
    </location>
</feature>
<feature type="active site" evidence="1">
    <location>
        <position position="180"/>
    </location>
</feature>
<feature type="active site" evidence="1">
    <location>
        <position position="250"/>
    </location>
</feature>
<feature type="active site" evidence="1">
    <location>
        <position position="253"/>
    </location>
</feature>
<feature type="active site" evidence="1">
    <location>
        <position position="276"/>
    </location>
</feature>
<feature type="active site" description="O-(3'-phospho-DNA)-tyrosine intermediate" evidence="1">
    <location>
        <position position="285"/>
    </location>
</feature>
<reference key="1">
    <citation type="journal article" date="2001" name="Proc. Natl. Acad. Sci. U.S.A.">
        <title>Analysis of the chromosome sequence of the legume symbiont Sinorhizobium meliloti strain 1021.</title>
        <authorList>
            <person name="Capela D."/>
            <person name="Barloy-Hubler F."/>
            <person name="Gouzy J."/>
            <person name="Bothe G."/>
            <person name="Ampe F."/>
            <person name="Batut J."/>
            <person name="Boistard P."/>
            <person name="Becker A."/>
            <person name="Boutry M."/>
            <person name="Cadieu E."/>
            <person name="Dreano S."/>
            <person name="Gloux S."/>
            <person name="Godrie T."/>
            <person name="Goffeau A."/>
            <person name="Kahn D."/>
            <person name="Kiss E."/>
            <person name="Lelaure V."/>
            <person name="Masuy D."/>
            <person name="Pohl T."/>
            <person name="Portetelle D."/>
            <person name="Puehler A."/>
            <person name="Purnelle B."/>
            <person name="Ramsperger U."/>
            <person name="Renard C."/>
            <person name="Thebault P."/>
            <person name="Vandenbol M."/>
            <person name="Weidner S."/>
            <person name="Galibert F."/>
        </authorList>
    </citation>
    <scope>NUCLEOTIDE SEQUENCE [LARGE SCALE GENOMIC DNA]</scope>
    <source>
        <strain>1021</strain>
    </source>
</reference>
<reference key="2">
    <citation type="journal article" date="2001" name="Science">
        <title>The composite genome of the legume symbiont Sinorhizobium meliloti.</title>
        <authorList>
            <person name="Galibert F."/>
            <person name="Finan T.M."/>
            <person name="Long S.R."/>
            <person name="Puehler A."/>
            <person name="Abola P."/>
            <person name="Ampe F."/>
            <person name="Barloy-Hubler F."/>
            <person name="Barnett M.J."/>
            <person name="Becker A."/>
            <person name="Boistard P."/>
            <person name="Bothe G."/>
            <person name="Boutry M."/>
            <person name="Bowser L."/>
            <person name="Buhrmester J."/>
            <person name="Cadieu E."/>
            <person name="Capela D."/>
            <person name="Chain P."/>
            <person name="Cowie A."/>
            <person name="Davis R.W."/>
            <person name="Dreano S."/>
            <person name="Federspiel N.A."/>
            <person name="Fisher R.F."/>
            <person name="Gloux S."/>
            <person name="Godrie T."/>
            <person name="Goffeau A."/>
            <person name="Golding B."/>
            <person name="Gouzy J."/>
            <person name="Gurjal M."/>
            <person name="Hernandez-Lucas I."/>
            <person name="Hong A."/>
            <person name="Huizar L."/>
            <person name="Hyman R.W."/>
            <person name="Jones T."/>
            <person name="Kahn D."/>
            <person name="Kahn M.L."/>
            <person name="Kalman S."/>
            <person name="Keating D.H."/>
            <person name="Kiss E."/>
            <person name="Komp C."/>
            <person name="Lelaure V."/>
            <person name="Masuy D."/>
            <person name="Palm C."/>
            <person name="Peck M.C."/>
            <person name="Pohl T.M."/>
            <person name="Portetelle D."/>
            <person name="Purnelle B."/>
            <person name="Ramsperger U."/>
            <person name="Surzycki R."/>
            <person name="Thebault P."/>
            <person name="Vandenbol M."/>
            <person name="Vorhoelter F.J."/>
            <person name="Weidner S."/>
            <person name="Wells D.H."/>
            <person name="Wong K."/>
            <person name="Yeh K.-C."/>
            <person name="Batut J."/>
        </authorList>
    </citation>
    <scope>NUCLEOTIDE SEQUENCE [LARGE SCALE GENOMIC DNA]</scope>
    <source>
        <strain>1021</strain>
    </source>
</reference>
<proteinExistence type="inferred from homology"/>
<name>XERD_RHIME</name>
<organism>
    <name type="scientific">Rhizobium meliloti (strain 1021)</name>
    <name type="common">Ensifer meliloti</name>
    <name type="synonym">Sinorhizobium meliloti</name>
    <dbReference type="NCBI Taxonomy" id="266834"/>
    <lineage>
        <taxon>Bacteria</taxon>
        <taxon>Pseudomonadati</taxon>
        <taxon>Pseudomonadota</taxon>
        <taxon>Alphaproteobacteria</taxon>
        <taxon>Hyphomicrobiales</taxon>
        <taxon>Rhizobiaceae</taxon>
        <taxon>Sinorhizobium/Ensifer group</taxon>
        <taxon>Sinorhizobium</taxon>
    </lineage>
</organism>
<sequence length="311" mass="34143">MTDMSAAYVEAFLEMMSAERGAAANTLQSYERDLEDARSFLRSRGTGLTDASADDLRSYLSHLAGQGFKASSQARRLSALRQFYKFLYAEGLRTDDPTGILDAPKKARTLPKTLSIEDVTRLIGQAEAEAKSGSDDVMAKLRMHALIELLYATGMRVSELVSLPASVLAQNGRFLIIRGKGNKERLVPLSQAAIRAMRAYGEALQEESADSPWLFPSNGKSGHLPRQVFARDLKSLAARAGIRVAAISPHVLRHAFASHLLANGADLRAVQELLGHSDISTTQIYTHVLEERLHDLVQNHHPLAKQAKKQD</sequence>
<gene>
    <name evidence="1" type="primary">xerD</name>
    <name type="ordered locus">R02681</name>
    <name type="ORF">SMc00691</name>
</gene>
<dbReference type="EMBL" id="AL591688">
    <property type="protein sequence ID" value="CAC47260.1"/>
    <property type="molecule type" value="Genomic_DNA"/>
</dbReference>
<dbReference type="RefSeq" id="NP_386787.1">
    <property type="nucleotide sequence ID" value="NC_003047.1"/>
</dbReference>
<dbReference type="RefSeq" id="WP_010970125.1">
    <property type="nucleotide sequence ID" value="NC_003047.1"/>
</dbReference>
<dbReference type="SMR" id="Q92ME3"/>
<dbReference type="EnsemblBacteria" id="CAC47260">
    <property type="protein sequence ID" value="CAC47260"/>
    <property type="gene ID" value="SMc00691"/>
</dbReference>
<dbReference type="KEGG" id="sme:SMc00691"/>
<dbReference type="PATRIC" id="fig|266834.11.peg.4183"/>
<dbReference type="eggNOG" id="COG4974">
    <property type="taxonomic scope" value="Bacteria"/>
</dbReference>
<dbReference type="HOGENOM" id="CLU_027562_9_0_5"/>
<dbReference type="OrthoDB" id="9801717at2"/>
<dbReference type="Proteomes" id="UP000001976">
    <property type="component" value="Chromosome"/>
</dbReference>
<dbReference type="GO" id="GO:0005737">
    <property type="term" value="C:cytoplasm"/>
    <property type="evidence" value="ECO:0007669"/>
    <property type="project" value="UniProtKB-SubCell"/>
</dbReference>
<dbReference type="GO" id="GO:0003677">
    <property type="term" value="F:DNA binding"/>
    <property type="evidence" value="ECO:0007669"/>
    <property type="project" value="UniProtKB-KW"/>
</dbReference>
<dbReference type="GO" id="GO:0009037">
    <property type="term" value="F:tyrosine-based site-specific recombinase activity"/>
    <property type="evidence" value="ECO:0007669"/>
    <property type="project" value="UniProtKB-UniRule"/>
</dbReference>
<dbReference type="GO" id="GO:0051301">
    <property type="term" value="P:cell division"/>
    <property type="evidence" value="ECO:0007669"/>
    <property type="project" value="UniProtKB-KW"/>
</dbReference>
<dbReference type="GO" id="GO:0007059">
    <property type="term" value="P:chromosome segregation"/>
    <property type="evidence" value="ECO:0007669"/>
    <property type="project" value="UniProtKB-UniRule"/>
</dbReference>
<dbReference type="GO" id="GO:0006313">
    <property type="term" value="P:DNA transposition"/>
    <property type="evidence" value="ECO:0007669"/>
    <property type="project" value="UniProtKB-UniRule"/>
</dbReference>
<dbReference type="CDD" id="cd00798">
    <property type="entry name" value="INT_XerDC_C"/>
    <property type="match status" value="1"/>
</dbReference>
<dbReference type="Gene3D" id="1.10.150.130">
    <property type="match status" value="1"/>
</dbReference>
<dbReference type="Gene3D" id="1.10.443.10">
    <property type="entry name" value="Intergrase catalytic core"/>
    <property type="match status" value="1"/>
</dbReference>
<dbReference type="HAMAP" id="MF_01808">
    <property type="entry name" value="Recomb_XerC_XerD"/>
    <property type="match status" value="1"/>
</dbReference>
<dbReference type="HAMAP" id="MF_01807">
    <property type="entry name" value="Recomb_XerD"/>
    <property type="match status" value="1"/>
</dbReference>
<dbReference type="InterPro" id="IPR044068">
    <property type="entry name" value="CB"/>
</dbReference>
<dbReference type="InterPro" id="IPR011010">
    <property type="entry name" value="DNA_brk_join_enz"/>
</dbReference>
<dbReference type="InterPro" id="IPR013762">
    <property type="entry name" value="Integrase-like_cat_sf"/>
</dbReference>
<dbReference type="InterPro" id="IPR002104">
    <property type="entry name" value="Integrase_catalytic"/>
</dbReference>
<dbReference type="InterPro" id="IPR010998">
    <property type="entry name" value="Integrase_recombinase_N"/>
</dbReference>
<dbReference type="InterPro" id="IPR004107">
    <property type="entry name" value="Integrase_SAM-like_N"/>
</dbReference>
<dbReference type="InterPro" id="IPR011932">
    <property type="entry name" value="Recomb_XerD"/>
</dbReference>
<dbReference type="InterPro" id="IPR023009">
    <property type="entry name" value="Tyrosine_recombinase_XerC/XerD"/>
</dbReference>
<dbReference type="InterPro" id="IPR050090">
    <property type="entry name" value="Tyrosine_recombinase_XerCD"/>
</dbReference>
<dbReference type="NCBIfam" id="NF001399">
    <property type="entry name" value="PRK00283.1"/>
    <property type="match status" value="1"/>
</dbReference>
<dbReference type="NCBIfam" id="TIGR02225">
    <property type="entry name" value="recomb_XerD"/>
    <property type="match status" value="1"/>
</dbReference>
<dbReference type="PANTHER" id="PTHR30349">
    <property type="entry name" value="PHAGE INTEGRASE-RELATED"/>
    <property type="match status" value="1"/>
</dbReference>
<dbReference type="PANTHER" id="PTHR30349:SF90">
    <property type="entry name" value="TYROSINE RECOMBINASE XERD"/>
    <property type="match status" value="1"/>
</dbReference>
<dbReference type="Pfam" id="PF02899">
    <property type="entry name" value="Phage_int_SAM_1"/>
    <property type="match status" value="1"/>
</dbReference>
<dbReference type="Pfam" id="PF00589">
    <property type="entry name" value="Phage_integrase"/>
    <property type="match status" value="1"/>
</dbReference>
<dbReference type="SUPFAM" id="SSF56349">
    <property type="entry name" value="DNA breaking-rejoining enzymes"/>
    <property type="match status" value="1"/>
</dbReference>
<dbReference type="PROSITE" id="PS51900">
    <property type="entry name" value="CB"/>
    <property type="match status" value="1"/>
</dbReference>
<dbReference type="PROSITE" id="PS51898">
    <property type="entry name" value="TYR_RECOMBINASE"/>
    <property type="match status" value="1"/>
</dbReference>